<dbReference type="EC" id="1.1.1.25" evidence="1"/>
<dbReference type="EMBL" id="CP001186">
    <property type="protein sequence ID" value="ACK95575.1"/>
    <property type="molecule type" value="Genomic_DNA"/>
</dbReference>
<dbReference type="RefSeq" id="WP_000812105.1">
    <property type="nucleotide sequence ID" value="NC_011772.1"/>
</dbReference>
<dbReference type="SMR" id="B7IYI7"/>
<dbReference type="KEGG" id="bcg:BCG9842_B0783"/>
<dbReference type="HOGENOM" id="CLU_044063_4_1_9"/>
<dbReference type="UniPathway" id="UPA00053">
    <property type="reaction ID" value="UER00087"/>
</dbReference>
<dbReference type="Proteomes" id="UP000006744">
    <property type="component" value="Chromosome"/>
</dbReference>
<dbReference type="GO" id="GO:0005829">
    <property type="term" value="C:cytosol"/>
    <property type="evidence" value="ECO:0007669"/>
    <property type="project" value="TreeGrafter"/>
</dbReference>
<dbReference type="GO" id="GO:0050661">
    <property type="term" value="F:NADP binding"/>
    <property type="evidence" value="ECO:0007669"/>
    <property type="project" value="InterPro"/>
</dbReference>
<dbReference type="GO" id="GO:0004764">
    <property type="term" value="F:shikimate 3-dehydrogenase (NADP+) activity"/>
    <property type="evidence" value="ECO:0007669"/>
    <property type="project" value="UniProtKB-UniRule"/>
</dbReference>
<dbReference type="GO" id="GO:0008652">
    <property type="term" value="P:amino acid biosynthetic process"/>
    <property type="evidence" value="ECO:0007669"/>
    <property type="project" value="UniProtKB-KW"/>
</dbReference>
<dbReference type="GO" id="GO:0009073">
    <property type="term" value="P:aromatic amino acid family biosynthetic process"/>
    <property type="evidence" value="ECO:0007669"/>
    <property type="project" value="UniProtKB-KW"/>
</dbReference>
<dbReference type="GO" id="GO:0009423">
    <property type="term" value="P:chorismate biosynthetic process"/>
    <property type="evidence" value="ECO:0007669"/>
    <property type="project" value="UniProtKB-UniRule"/>
</dbReference>
<dbReference type="GO" id="GO:0019632">
    <property type="term" value="P:shikimate metabolic process"/>
    <property type="evidence" value="ECO:0007669"/>
    <property type="project" value="InterPro"/>
</dbReference>
<dbReference type="CDD" id="cd01065">
    <property type="entry name" value="NAD_bind_Shikimate_DH"/>
    <property type="match status" value="1"/>
</dbReference>
<dbReference type="FunFam" id="3.40.50.10860:FF:000011">
    <property type="entry name" value="Shikimate dehydrogenase (NADP(+))"/>
    <property type="match status" value="1"/>
</dbReference>
<dbReference type="FunFam" id="3.40.50.720:FF:000257">
    <property type="entry name" value="Shikimate dehydrogenase (NADP(+))"/>
    <property type="match status" value="1"/>
</dbReference>
<dbReference type="Gene3D" id="3.40.50.10860">
    <property type="entry name" value="Leucine Dehydrogenase, chain A, domain 1"/>
    <property type="match status" value="1"/>
</dbReference>
<dbReference type="Gene3D" id="3.40.50.720">
    <property type="entry name" value="NAD(P)-binding Rossmann-like Domain"/>
    <property type="match status" value="1"/>
</dbReference>
<dbReference type="HAMAP" id="MF_00222">
    <property type="entry name" value="Shikimate_DH_AroE"/>
    <property type="match status" value="1"/>
</dbReference>
<dbReference type="InterPro" id="IPR046346">
    <property type="entry name" value="Aminoacid_DH-like_N_sf"/>
</dbReference>
<dbReference type="InterPro" id="IPR036291">
    <property type="entry name" value="NAD(P)-bd_dom_sf"/>
</dbReference>
<dbReference type="InterPro" id="IPR041121">
    <property type="entry name" value="SDH_C"/>
</dbReference>
<dbReference type="InterPro" id="IPR011342">
    <property type="entry name" value="Shikimate_DH"/>
</dbReference>
<dbReference type="InterPro" id="IPR013708">
    <property type="entry name" value="Shikimate_DH-bd_N"/>
</dbReference>
<dbReference type="InterPro" id="IPR022893">
    <property type="entry name" value="Shikimate_DH_fam"/>
</dbReference>
<dbReference type="InterPro" id="IPR006151">
    <property type="entry name" value="Shikm_DH/Glu-tRNA_Rdtase"/>
</dbReference>
<dbReference type="NCBIfam" id="TIGR00507">
    <property type="entry name" value="aroE"/>
    <property type="match status" value="1"/>
</dbReference>
<dbReference type="NCBIfam" id="NF001319">
    <property type="entry name" value="PRK00258.3-3"/>
    <property type="match status" value="1"/>
</dbReference>
<dbReference type="PANTHER" id="PTHR21089:SF1">
    <property type="entry name" value="BIFUNCTIONAL 3-DEHYDROQUINATE DEHYDRATASE_SHIKIMATE DEHYDROGENASE, CHLOROPLASTIC"/>
    <property type="match status" value="1"/>
</dbReference>
<dbReference type="PANTHER" id="PTHR21089">
    <property type="entry name" value="SHIKIMATE DEHYDROGENASE"/>
    <property type="match status" value="1"/>
</dbReference>
<dbReference type="Pfam" id="PF18317">
    <property type="entry name" value="SDH_C"/>
    <property type="match status" value="1"/>
</dbReference>
<dbReference type="Pfam" id="PF01488">
    <property type="entry name" value="Shikimate_DH"/>
    <property type="match status" value="1"/>
</dbReference>
<dbReference type="Pfam" id="PF08501">
    <property type="entry name" value="Shikimate_dh_N"/>
    <property type="match status" value="1"/>
</dbReference>
<dbReference type="SUPFAM" id="SSF53223">
    <property type="entry name" value="Aminoacid dehydrogenase-like, N-terminal domain"/>
    <property type="match status" value="1"/>
</dbReference>
<dbReference type="SUPFAM" id="SSF51735">
    <property type="entry name" value="NAD(P)-binding Rossmann-fold domains"/>
    <property type="match status" value="1"/>
</dbReference>
<comment type="function">
    <text evidence="1">Involved in the biosynthesis of the chorismate, which leads to the biosynthesis of aromatic amino acids. Catalyzes the reversible NADPH linked reduction of 3-dehydroshikimate (DHSA) to yield shikimate (SA).</text>
</comment>
<comment type="catalytic activity">
    <reaction evidence="1">
        <text>shikimate + NADP(+) = 3-dehydroshikimate + NADPH + H(+)</text>
        <dbReference type="Rhea" id="RHEA:17737"/>
        <dbReference type="ChEBI" id="CHEBI:15378"/>
        <dbReference type="ChEBI" id="CHEBI:16630"/>
        <dbReference type="ChEBI" id="CHEBI:36208"/>
        <dbReference type="ChEBI" id="CHEBI:57783"/>
        <dbReference type="ChEBI" id="CHEBI:58349"/>
        <dbReference type="EC" id="1.1.1.25"/>
    </reaction>
</comment>
<comment type="pathway">
    <text evidence="1">Metabolic intermediate biosynthesis; chorismate biosynthesis; chorismate from D-erythrose 4-phosphate and phosphoenolpyruvate: step 4/7.</text>
</comment>
<comment type="subunit">
    <text evidence="1">Homodimer.</text>
</comment>
<comment type="similarity">
    <text evidence="1">Belongs to the shikimate dehydrogenase family.</text>
</comment>
<proteinExistence type="inferred from homology"/>
<reference key="1">
    <citation type="submission" date="2008-10" db="EMBL/GenBank/DDBJ databases">
        <title>Genome sequence of Bacillus cereus G9842.</title>
        <authorList>
            <person name="Dodson R.J."/>
            <person name="Durkin A.S."/>
            <person name="Rosovitz M.J."/>
            <person name="Rasko D.A."/>
            <person name="Hoffmaster A."/>
            <person name="Ravel J."/>
            <person name="Sutton G."/>
        </authorList>
    </citation>
    <scope>NUCLEOTIDE SEQUENCE [LARGE SCALE GENOMIC DNA]</scope>
    <source>
        <strain>G9842</strain>
    </source>
</reference>
<evidence type="ECO:0000255" key="1">
    <source>
        <dbReference type="HAMAP-Rule" id="MF_00222"/>
    </source>
</evidence>
<feature type="chain" id="PRO_1000118869" description="Shikimate dehydrogenase (NADP(+))">
    <location>
        <begin position="1"/>
        <end position="277"/>
    </location>
</feature>
<feature type="active site" description="Proton acceptor" evidence="1">
    <location>
        <position position="66"/>
    </location>
</feature>
<feature type="binding site" evidence="1">
    <location>
        <begin position="15"/>
        <end position="17"/>
    </location>
    <ligand>
        <name>shikimate</name>
        <dbReference type="ChEBI" id="CHEBI:36208"/>
    </ligand>
</feature>
<feature type="binding site" evidence="1">
    <location>
        <position position="62"/>
    </location>
    <ligand>
        <name>shikimate</name>
        <dbReference type="ChEBI" id="CHEBI:36208"/>
    </ligand>
</feature>
<feature type="binding site" evidence="1">
    <location>
        <position position="87"/>
    </location>
    <ligand>
        <name>shikimate</name>
        <dbReference type="ChEBI" id="CHEBI:36208"/>
    </ligand>
</feature>
<feature type="binding site" evidence="1">
    <location>
        <position position="102"/>
    </location>
    <ligand>
        <name>shikimate</name>
        <dbReference type="ChEBI" id="CHEBI:36208"/>
    </ligand>
</feature>
<feature type="binding site" evidence="1">
    <location>
        <begin position="127"/>
        <end position="131"/>
    </location>
    <ligand>
        <name>NADP(+)</name>
        <dbReference type="ChEBI" id="CHEBI:58349"/>
    </ligand>
</feature>
<feature type="binding site" evidence="1">
    <location>
        <begin position="151"/>
        <end position="156"/>
    </location>
    <ligand>
        <name>NADP(+)</name>
        <dbReference type="ChEBI" id="CHEBI:58349"/>
    </ligand>
</feature>
<feature type="binding site" evidence="1">
    <location>
        <position position="219"/>
    </location>
    <ligand>
        <name>NADP(+)</name>
        <dbReference type="ChEBI" id="CHEBI:58349"/>
    </ligand>
</feature>
<feature type="binding site" evidence="1">
    <location>
        <position position="221"/>
    </location>
    <ligand>
        <name>shikimate</name>
        <dbReference type="ChEBI" id="CHEBI:36208"/>
    </ligand>
</feature>
<feature type="binding site" evidence="1">
    <location>
        <position position="242"/>
    </location>
    <ligand>
        <name>NADP(+)</name>
        <dbReference type="ChEBI" id="CHEBI:58349"/>
    </ligand>
</feature>
<gene>
    <name evidence="1" type="primary">aroE</name>
    <name type="ordered locus">BCG9842_B0783</name>
</gene>
<name>AROE_BACC2</name>
<organism>
    <name type="scientific">Bacillus cereus (strain G9842)</name>
    <dbReference type="NCBI Taxonomy" id="405531"/>
    <lineage>
        <taxon>Bacteria</taxon>
        <taxon>Bacillati</taxon>
        <taxon>Bacillota</taxon>
        <taxon>Bacilli</taxon>
        <taxon>Bacillales</taxon>
        <taxon>Bacillaceae</taxon>
        <taxon>Bacillus</taxon>
        <taxon>Bacillus cereus group</taxon>
    </lineage>
</organism>
<protein>
    <recommendedName>
        <fullName evidence="1">Shikimate dehydrogenase (NADP(+))</fullName>
        <shortName evidence="1">SDH</shortName>
        <ecNumber evidence="1">1.1.1.25</ecNumber>
    </recommendedName>
</protein>
<accession>B7IYI7</accession>
<sequence>MKQLYGVIGNPIGHSLSPVMHNNAFEHLNMDAHYHAFLVEEEVLGEAVRGLKALGISGFNVTTPHKVAIMEYLDEIDPLARKIGAVNTVVHKNGRLIGYNTDGIGFVRALQSISHEPLQGKRILLLGAGGASRAIYFSLADVGVKEIDVANRTVDKAKELIAARTADVNSVALSLEKATEEQGNYDIIIQTTTIGMHPHVEHTPLQICSLKKGTIVSDIIYNPFETKILCEAKEQGAIIQNGIDMFVYQGALAFEMWTGSVPNIGRMKQLVIEKLGG</sequence>
<keyword id="KW-0028">Amino-acid biosynthesis</keyword>
<keyword id="KW-0057">Aromatic amino acid biosynthesis</keyword>
<keyword id="KW-0521">NADP</keyword>
<keyword id="KW-0560">Oxidoreductase</keyword>